<proteinExistence type="inferred from homology"/>
<organism>
    <name type="scientific">Amoebophilus asiaticus (strain 5a2)</name>
    <dbReference type="NCBI Taxonomy" id="452471"/>
    <lineage>
        <taxon>Bacteria</taxon>
        <taxon>Pseudomonadati</taxon>
        <taxon>Bacteroidota</taxon>
        <taxon>Cytophagia</taxon>
        <taxon>Cytophagales</taxon>
        <taxon>Amoebophilaceae</taxon>
        <taxon>Candidatus Amoebophilus</taxon>
    </lineage>
</organism>
<evidence type="ECO:0000255" key="1">
    <source>
        <dbReference type="HAMAP-Rule" id="MF_01358"/>
    </source>
</evidence>
<accession>B3ES55</accession>
<dbReference type="EC" id="7.1.1.-" evidence="1"/>
<dbReference type="EMBL" id="CP001102">
    <property type="protein sequence ID" value="ACE06057.1"/>
    <property type="molecule type" value="Genomic_DNA"/>
</dbReference>
<dbReference type="RefSeq" id="WP_012472824.1">
    <property type="nucleotide sequence ID" value="NC_010830.1"/>
</dbReference>
<dbReference type="SMR" id="B3ES55"/>
<dbReference type="STRING" id="452471.Aasi_0661"/>
<dbReference type="KEGG" id="aas:Aasi_0661"/>
<dbReference type="eggNOG" id="COG0649">
    <property type="taxonomic scope" value="Bacteria"/>
</dbReference>
<dbReference type="HOGENOM" id="CLU_015134_1_2_10"/>
<dbReference type="OrthoDB" id="9801496at2"/>
<dbReference type="Proteomes" id="UP000001227">
    <property type="component" value="Chromosome"/>
</dbReference>
<dbReference type="GO" id="GO:0005886">
    <property type="term" value="C:plasma membrane"/>
    <property type="evidence" value="ECO:0007669"/>
    <property type="project" value="UniProtKB-SubCell"/>
</dbReference>
<dbReference type="GO" id="GO:0051287">
    <property type="term" value="F:NAD binding"/>
    <property type="evidence" value="ECO:0007669"/>
    <property type="project" value="InterPro"/>
</dbReference>
<dbReference type="GO" id="GO:0050136">
    <property type="term" value="F:NADH:ubiquinone reductase (non-electrogenic) activity"/>
    <property type="evidence" value="ECO:0007669"/>
    <property type="project" value="UniProtKB-UniRule"/>
</dbReference>
<dbReference type="GO" id="GO:0048038">
    <property type="term" value="F:quinone binding"/>
    <property type="evidence" value="ECO:0007669"/>
    <property type="project" value="UniProtKB-KW"/>
</dbReference>
<dbReference type="Gene3D" id="1.10.645.10">
    <property type="entry name" value="Cytochrome-c3 Hydrogenase, chain B"/>
    <property type="match status" value="1"/>
</dbReference>
<dbReference type="HAMAP" id="MF_01358">
    <property type="entry name" value="NDH1_NuoD"/>
    <property type="match status" value="1"/>
</dbReference>
<dbReference type="InterPro" id="IPR001135">
    <property type="entry name" value="NADH_Q_OxRdtase_suD"/>
</dbReference>
<dbReference type="InterPro" id="IPR022885">
    <property type="entry name" value="NDH1_su_D/H"/>
</dbReference>
<dbReference type="InterPro" id="IPR029014">
    <property type="entry name" value="NiFe-Hase_large"/>
</dbReference>
<dbReference type="NCBIfam" id="NF004739">
    <property type="entry name" value="PRK06075.1"/>
    <property type="match status" value="1"/>
</dbReference>
<dbReference type="PANTHER" id="PTHR11993:SF10">
    <property type="entry name" value="NADH DEHYDROGENASE [UBIQUINONE] IRON-SULFUR PROTEIN 2, MITOCHONDRIAL"/>
    <property type="match status" value="1"/>
</dbReference>
<dbReference type="PANTHER" id="PTHR11993">
    <property type="entry name" value="NADH-UBIQUINONE OXIDOREDUCTASE 49 KDA SUBUNIT"/>
    <property type="match status" value="1"/>
</dbReference>
<dbReference type="Pfam" id="PF00346">
    <property type="entry name" value="Complex1_49kDa"/>
    <property type="match status" value="1"/>
</dbReference>
<dbReference type="SUPFAM" id="SSF56762">
    <property type="entry name" value="HydB/Nqo4-like"/>
    <property type="match status" value="1"/>
</dbReference>
<reference key="1">
    <citation type="journal article" date="2010" name="J. Bacteriol.">
        <title>The genome of the amoeba symbiont 'Candidatus Amoebophilus asiaticus' reveals common mechanisms for host cell interaction among amoeba-associated bacteria.</title>
        <authorList>
            <person name="Schmitz-Esser S."/>
            <person name="Tischler P."/>
            <person name="Arnold R."/>
            <person name="Montanaro J."/>
            <person name="Wagner M."/>
            <person name="Rattei T."/>
            <person name="Horn M."/>
        </authorList>
    </citation>
    <scope>NUCLEOTIDE SEQUENCE [LARGE SCALE GENOMIC DNA]</scope>
    <source>
        <strain>5a2</strain>
    </source>
</reference>
<feature type="chain" id="PRO_0000357754" description="NADH-quinone oxidoreductase subunit D">
    <location>
        <begin position="1"/>
        <end position="403"/>
    </location>
</feature>
<protein>
    <recommendedName>
        <fullName evidence="1">NADH-quinone oxidoreductase subunit D</fullName>
        <ecNumber evidence="1">7.1.1.-</ecNumber>
    </recommendedName>
    <alternativeName>
        <fullName evidence="1">NADH dehydrogenase I subunit D</fullName>
    </alternativeName>
    <alternativeName>
        <fullName evidence="1">NDH-1 subunit D</fullName>
    </alternativeName>
</protein>
<gene>
    <name evidence="1" type="primary">nuoD</name>
    <name type="ordered locus">Aasi_0661</name>
</gene>
<comment type="function">
    <text evidence="1">NDH-1 shuttles electrons from NADH, via FMN and iron-sulfur (Fe-S) centers, to quinones in the respiratory chain. The immediate electron acceptor for the enzyme in this species is believed to be a menaquinone. Couples the redox reaction to proton translocation (for every two electrons transferred, four hydrogen ions are translocated across the cytoplasmic membrane), and thus conserves the redox energy in a proton gradient.</text>
</comment>
<comment type="catalytic activity">
    <reaction evidence="1">
        <text>a quinone + NADH + 5 H(+)(in) = a quinol + NAD(+) + 4 H(+)(out)</text>
        <dbReference type="Rhea" id="RHEA:57888"/>
        <dbReference type="ChEBI" id="CHEBI:15378"/>
        <dbReference type="ChEBI" id="CHEBI:24646"/>
        <dbReference type="ChEBI" id="CHEBI:57540"/>
        <dbReference type="ChEBI" id="CHEBI:57945"/>
        <dbReference type="ChEBI" id="CHEBI:132124"/>
    </reaction>
</comment>
<comment type="subunit">
    <text evidence="1">NDH-1 is composed of 14 different subunits. Subunits NuoB, C, D, E, F, and G constitute the peripheral sector of the complex.</text>
</comment>
<comment type="subcellular location">
    <subcellularLocation>
        <location evidence="1">Cell membrane</location>
        <topology evidence="1">Peripheral membrane protein</topology>
        <orientation evidence="1">Cytoplasmic side</orientation>
    </subcellularLocation>
</comment>
<comment type="similarity">
    <text evidence="1">Belongs to the complex I 49 kDa subunit family.</text>
</comment>
<keyword id="KW-1003">Cell membrane</keyword>
<keyword id="KW-0472">Membrane</keyword>
<keyword id="KW-0520">NAD</keyword>
<keyword id="KW-0874">Quinone</keyword>
<keyword id="KW-1185">Reference proteome</keyword>
<keyword id="KW-1278">Translocase</keyword>
<keyword id="KW-0813">Transport</keyword>
<name>NUOD_AMOA5</name>
<sequence length="403" mass="45626">MGKHIQYQGGNFKNTAPTKYQPTDLKVEEVLINIGPQHPATHGILRLEVILDGEIVVDVVPHLGYLHRCFEKHAATLPYNQTIPFVDRLDYLAAMNSEHAFAMGVEHMLGLTGKLPRRVEYIRVLMAELNRLASHFMAIGTYGIDLGAFTSFLWLMRDREYILRLFEWASGARMLYNYIWIGGLYYDLPVGFEERCLEFITYLKPKLEEINQLLIDNTLFIKRTANVGVLPLATAINHGVSGPILRASGLRLDLRRIDGYSIYPELSFDIPIGEGLMGHVGDCWDRTWVKFQECKESIKITEQCLVRLTSDLKRTADFNPQKMVPKKVRTKAQDCYIRAENPRGELGFFFRASDNGDKPIRCKARSSSFSNLSVISSIAKGQVLADLIAIIGSIDIVLGEIDR</sequence>